<organism>
    <name type="scientific">Mus musculus</name>
    <name type="common">Mouse</name>
    <dbReference type="NCBI Taxonomy" id="10090"/>
    <lineage>
        <taxon>Eukaryota</taxon>
        <taxon>Metazoa</taxon>
        <taxon>Chordata</taxon>
        <taxon>Craniata</taxon>
        <taxon>Vertebrata</taxon>
        <taxon>Euteleostomi</taxon>
        <taxon>Mammalia</taxon>
        <taxon>Eutheria</taxon>
        <taxon>Euarchontoglires</taxon>
        <taxon>Glires</taxon>
        <taxon>Rodentia</taxon>
        <taxon>Myomorpha</taxon>
        <taxon>Muroidea</taxon>
        <taxon>Muridae</taxon>
        <taxon>Murinae</taxon>
        <taxon>Mus</taxon>
        <taxon>Mus</taxon>
    </lineage>
</organism>
<reference key="1">
    <citation type="journal article" date="1998" name="Biochem. Mol. Biol. Int.">
        <title>Isolation and characterization of the mouse ribosomal protein S7 gene.</title>
        <authorList>
            <person name="Annilo T."/>
            <person name="Jelina J."/>
            <person name="Pata I."/>
            <person name="Metspalu A."/>
        </authorList>
    </citation>
    <scope>NUCLEOTIDE SEQUENCE [GENOMIC DNA]</scope>
    <source>
        <strain>129/Sv</strain>
    </source>
</reference>
<reference key="2">
    <citation type="journal article" date="2004" name="Genome Res.">
        <title>The status, quality, and expansion of the NIH full-length cDNA project: the Mammalian Gene Collection (MGC).</title>
        <authorList>
            <consortium name="The MGC Project Team"/>
        </authorList>
    </citation>
    <scope>NUCLEOTIDE SEQUENCE [LARGE SCALE MRNA]</scope>
    <source>
        <tissue>Mammary tumor</tissue>
    </source>
</reference>
<reference evidence="4 5" key="3">
    <citation type="journal article" date="2022" name="Nature">
        <title>A male germ-cell-specific ribosome controls male fertility.</title>
        <authorList>
            <person name="Li H."/>
            <person name="Huo Y."/>
            <person name="He X."/>
            <person name="Yao L."/>
            <person name="Zhang H."/>
            <person name="Cui Y."/>
            <person name="Xiao H."/>
            <person name="Xie W."/>
            <person name="Zhang D."/>
            <person name="Wang Y."/>
            <person name="Zhang S."/>
            <person name="Tu H."/>
            <person name="Cheng Y."/>
            <person name="Guo Y."/>
            <person name="Cao X."/>
            <person name="Zhu Y."/>
            <person name="Jiang T."/>
            <person name="Guo X."/>
            <person name="Qin Y."/>
            <person name="Sha J."/>
        </authorList>
    </citation>
    <scope>STRUCTURE BY ELECTRON MICROSCOPY (3.03 ANGSTROMS) OF RIBOSOME</scope>
    <scope>FUNCTION</scope>
    <scope>SUBUNIT</scope>
    <scope>SUBCELLULAR LOCATION</scope>
</reference>
<sequence>MFSSSAKIVKPNGEKPDEFESGISQALLELEMNSDLKAQLRELNITAAKEIEVGGGRKAIIIFVPVPQLKSFQKIQVRLVRELEKKFSGKHVVFIAQRRILPKPTRKSRTKNKQKRPRSRTLTAVHDAILEDLVFPSEIVGKRIRVKLDGSRLIKVHLDKAQQNNVEHKVETFSGVYKKLTGKDVNFEFPEFQL</sequence>
<keyword id="KW-0002">3D-structure</keyword>
<keyword id="KW-0007">Acetylation</keyword>
<keyword id="KW-0963">Cytoplasm</keyword>
<keyword id="KW-0206">Cytoskeleton</keyword>
<keyword id="KW-1017">Isopeptide bond</keyword>
<keyword id="KW-0539">Nucleus</keyword>
<keyword id="KW-1185">Reference proteome</keyword>
<keyword id="KW-0687">Ribonucleoprotein</keyword>
<keyword id="KW-0689">Ribosomal protein</keyword>
<keyword id="KW-0832">Ubl conjugation</keyword>
<name>RS7_MOUSE</name>
<protein>
    <recommendedName>
        <fullName evidence="3">Small ribosomal subunit protein eS7</fullName>
    </recommendedName>
    <alternativeName>
        <fullName>40S ribosomal protein S7</fullName>
    </alternativeName>
</protein>
<dbReference type="EMBL" id="AF043285">
    <property type="protein sequence ID" value="AAB97861.1"/>
    <property type="molecule type" value="Genomic_DNA"/>
</dbReference>
<dbReference type="EMBL" id="BC002014">
    <property type="protein sequence ID" value="AAH02014.1"/>
    <property type="molecule type" value="mRNA"/>
</dbReference>
<dbReference type="CCDS" id="CCDS25851.1"/>
<dbReference type="RefSeq" id="NP_035430.1">
    <property type="nucleotide sequence ID" value="NM_011300.3"/>
</dbReference>
<dbReference type="PDB" id="7CPU">
    <property type="method" value="EM"/>
    <property type="resolution" value="2.82 A"/>
    <property type="chains" value="SH=1-194"/>
</dbReference>
<dbReference type="PDB" id="7CPV">
    <property type="method" value="EM"/>
    <property type="resolution" value="3.03 A"/>
    <property type="chains" value="SH=1-194"/>
</dbReference>
<dbReference type="PDB" id="7LS1">
    <property type="method" value="EM"/>
    <property type="resolution" value="3.30 A"/>
    <property type="chains" value="t=1-194"/>
</dbReference>
<dbReference type="PDB" id="7LS2">
    <property type="method" value="EM"/>
    <property type="resolution" value="3.10 A"/>
    <property type="chains" value="t=1-194"/>
</dbReference>
<dbReference type="PDB" id="7QVP">
    <property type="method" value="EM"/>
    <property type="resolution" value="3.00 A"/>
    <property type="chains" value="RH/SH=1-194"/>
</dbReference>
<dbReference type="PDBsum" id="7CPU"/>
<dbReference type="PDBsum" id="7CPV"/>
<dbReference type="PDBsum" id="7LS1"/>
<dbReference type="PDBsum" id="7LS2"/>
<dbReference type="PDBsum" id="7QVP"/>
<dbReference type="EMDB" id="EMD-14181"/>
<dbReference type="EMDB" id="EMD-23500"/>
<dbReference type="EMDB" id="EMD-23501"/>
<dbReference type="EMDB" id="EMD-30432"/>
<dbReference type="EMDB" id="EMD-30433"/>
<dbReference type="SMR" id="P62082"/>
<dbReference type="BioGRID" id="203016">
    <property type="interactions" value="85"/>
</dbReference>
<dbReference type="ComplexPortal" id="CPX-5261">
    <property type="entry name" value="40S cytosolic small ribosomal subunit"/>
</dbReference>
<dbReference type="FunCoup" id="P62082">
    <property type="interactions" value="2808"/>
</dbReference>
<dbReference type="IntAct" id="P62082">
    <property type="interactions" value="7"/>
</dbReference>
<dbReference type="MINT" id="P62082"/>
<dbReference type="STRING" id="10090.ENSMUSP00000073880"/>
<dbReference type="GlyGen" id="P62082">
    <property type="glycosylation" value="1 site, 1 O-linked glycan (1 site)"/>
</dbReference>
<dbReference type="iPTMnet" id="P62082"/>
<dbReference type="PhosphoSitePlus" id="P62082"/>
<dbReference type="SwissPalm" id="P62082"/>
<dbReference type="jPOST" id="P62082"/>
<dbReference type="PaxDb" id="10090-ENSMUSP00000073880"/>
<dbReference type="PeptideAtlas" id="P62082"/>
<dbReference type="ProteomicsDB" id="262735"/>
<dbReference type="Pumba" id="P62082"/>
<dbReference type="TopDownProteomics" id="P62082"/>
<dbReference type="Antibodypedia" id="26343">
    <property type="antibodies" value="179 antibodies from 28 providers"/>
</dbReference>
<dbReference type="DNASU" id="20115"/>
<dbReference type="Ensembl" id="ENSMUST00000074267.5">
    <property type="protein sequence ID" value="ENSMUSP00000073880.4"/>
    <property type="gene ID" value="ENSMUSG00000061477.5"/>
</dbReference>
<dbReference type="Ensembl" id="ENSMUST00000221871.2">
    <property type="protein sequence ID" value="ENSMUSP00000152456.2"/>
    <property type="gene ID" value="ENSMUSG00000061477.5"/>
</dbReference>
<dbReference type="GeneID" id="20115"/>
<dbReference type="KEGG" id="mmu:20115"/>
<dbReference type="UCSC" id="uc007nfs.2">
    <property type="organism name" value="mouse"/>
</dbReference>
<dbReference type="AGR" id="MGI:1333818"/>
<dbReference type="CTD" id="6201"/>
<dbReference type="MGI" id="MGI:1333818">
    <property type="gene designation" value="Rps7"/>
</dbReference>
<dbReference type="VEuPathDB" id="HostDB:ENSMUSG00000061477"/>
<dbReference type="eggNOG" id="KOG3320">
    <property type="taxonomic scope" value="Eukaryota"/>
</dbReference>
<dbReference type="GeneTree" id="ENSGT00390000014122"/>
<dbReference type="HOGENOM" id="CLU_088621_1_2_1"/>
<dbReference type="InParanoid" id="P62082"/>
<dbReference type="OMA" id="AAYHKVQ"/>
<dbReference type="OrthoDB" id="1724687at2759"/>
<dbReference type="PhylomeDB" id="P62082"/>
<dbReference type="TreeFam" id="TF343364"/>
<dbReference type="Reactome" id="R-MMU-156827">
    <property type="pathway name" value="L13a-mediated translational silencing of Ceruloplasmin expression"/>
</dbReference>
<dbReference type="Reactome" id="R-MMU-1799339">
    <property type="pathway name" value="SRP-dependent cotranslational protein targeting to membrane"/>
</dbReference>
<dbReference type="Reactome" id="R-MMU-6791226">
    <property type="pathway name" value="Major pathway of rRNA processing in the nucleolus and cytosol"/>
</dbReference>
<dbReference type="Reactome" id="R-MMU-72649">
    <property type="pathway name" value="Translation initiation complex formation"/>
</dbReference>
<dbReference type="Reactome" id="R-MMU-72689">
    <property type="pathway name" value="Formation of a pool of free 40S subunits"/>
</dbReference>
<dbReference type="Reactome" id="R-MMU-72695">
    <property type="pathway name" value="Formation of the ternary complex, and subsequently, the 43S complex"/>
</dbReference>
<dbReference type="Reactome" id="R-MMU-72702">
    <property type="pathway name" value="Ribosomal scanning and start codon recognition"/>
</dbReference>
<dbReference type="Reactome" id="R-MMU-72706">
    <property type="pathway name" value="GTP hydrolysis and joining of the 60S ribosomal subunit"/>
</dbReference>
<dbReference type="Reactome" id="R-MMU-975956">
    <property type="pathway name" value="Nonsense Mediated Decay (NMD) independent of the Exon Junction Complex (EJC)"/>
</dbReference>
<dbReference type="Reactome" id="R-MMU-975957">
    <property type="pathway name" value="Nonsense Mediated Decay (NMD) enhanced by the Exon Junction Complex (EJC)"/>
</dbReference>
<dbReference type="BioGRID-ORCS" id="20115">
    <property type="hits" value="27 hits in 81 CRISPR screens"/>
</dbReference>
<dbReference type="ChiTaRS" id="Rps7">
    <property type="organism name" value="mouse"/>
</dbReference>
<dbReference type="PRO" id="PR:P62082"/>
<dbReference type="Proteomes" id="UP000000589">
    <property type="component" value="Chromosome 12"/>
</dbReference>
<dbReference type="RNAct" id="P62082">
    <property type="molecule type" value="protein"/>
</dbReference>
<dbReference type="Bgee" id="ENSMUSG00000061477">
    <property type="expression patterns" value="Expressed in cortical plate and 68 other cell types or tissues"/>
</dbReference>
<dbReference type="ExpressionAtlas" id="P62082">
    <property type="expression patterns" value="baseline and differential"/>
</dbReference>
<dbReference type="GO" id="GO:0005813">
    <property type="term" value="C:centrosome"/>
    <property type="evidence" value="ECO:0007669"/>
    <property type="project" value="UniProtKB-SubCell"/>
</dbReference>
<dbReference type="GO" id="GO:0005737">
    <property type="term" value="C:cytoplasm"/>
    <property type="evidence" value="ECO:0000303"/>
    <property type="project" value="ComplexPortal"/>
</dbReference>
<dbReference type="GO" id="GO:0005829">
    <property type="term" value="C:cytosol"/>
    <property type="evidence" value="ECO:0000304"/>
    <property type="project" value="Reactome"/>
</dbReference>
<dbReference type="GO" id="GO:0022627">
    <property type="term" value="C:cytosolic small ribosomal subunit"/>
    <property type="evidence" value="ECO:0000314"/>
    <property type="project" value="UniProtKB"/>
</dbReference>
<dbReference type="GO" id="GO:0005783">
    <property type="term" value="C:endoplasmic reticulum"/>
    <property type="evidence" value="ECO:0007669"/>
    <property type="project" value="Ensembl"/>
</dbReference>
<dbReference type="GO" id="GO:0005730">
    <property type="term" value="C:nucleolus"/>
    <property type="evidence" value="ECO:0007669"/>
    <property type="project" value="UniProtKB-SubCell"/>
</dbReference>
<dbReference type="GO" id="GO:0098794">
    <property type="term" value="C:postsynapse"/>
    <property type="evidence" value="ECO:0000303"/>
    <property type="project" value="SynGO"/>
</dbReference>
<dbReference type="GO" id="GO:1990904">
    <property type="term" value="C:ribonucleoprotein complex"/>
    <property type="evidence" value="ECO:0000266"/>
    <property type="project" value="MGI"/>
</dbReference>
<dbReference type="GO" id="GO:0005840">
    <property type="term" value="C:ribosome"/>
    <property type="evidence" value="ECO:0000303"/>
    <property type="project" value="SynGO"/>
</dbReference>
<dbReference type="GO" id="GO:0032040">
    <property type="term" value="C:small-subunit processome"/>
    <property type="evidence" value="ECO:0000250"/>
    <property type="project" value="UniProtKB"/>
</dbReference>
<dbReference type="GO" id="GO:0045202">
    <property type="term" value="C:synapse"/>
    <property type="evidence" value="ECO:0000314"/>
    <property type="project" value="SynGO"/>
</dbReference>
<dbReference type="GO" id="GO:0003730">
    <property type="term" value="F:mRNA 3'-UTR binding"/>
    <property type="evidence" value="ECO:0007669"/>
    <property type="project" value="Ensembl"/>
</dbReference>
<dbReference type="GO" id="GO:0048027">
    <property type="term" value="F:mRNA 5'-UTR binding"/>
    <property type="evidence" value="ECO:0007669"/>
    <property type="project" value="Ensembl"/>
</dbReference>
<dbReference type="GO" id="GO:0019901">
    <property type="term" value="F:protein kinase binding"/>
    <property type="evidence" value="ECO:0007669"/>
    <property type="project" value="Ensembl"/>
</dbReference>
<dbReference type="GO" id="GO:0003735">
    <property type="term" value="F:structural constituent of ribosome"/>
    <property type="evidence" value="ECO:0000314"/>
    <property type="project" value="UniProtKB"/>
</dbReference>
<dbReference type="GO" id="GO:1990948">
    <property type="term" value="F:ubiquitin ligase inhibitor activity"/>
    <property type="evidence" value="ECO:0007669"/>
    <property type="project" value="Ensembl"/>
</dbReference>
<dbReference type="GO" id="GO:0002181">
    <property type="term" value="P:cytoplasmic translation"/>
    <property type="evidence" value="ECO:0000303"/>
    <property type="project" value="ComplexPortal"/>
</dbReference>
<dbReference type="GO" id="GO:2000059">
    <property type="term" value="P:negative regulation of ubiquitin-dependent protein catabolic process"/>
    <property type="evidence" value="ECO:0007669"/>
    <property type="project" value="Ensembl"/>
</dbReference>
<dbReference type="GO" id="GO:0014033">
    <property type="term" value="P:neural crest cell differentiation"/>
    <property type="evidence" value="ECO:0000315"/>
    <property type="project" value="MGI"/>
</dbReference>
<dbReference type="GO" id="GO:0001843">
    <property type="term" value="P:neural tube closure"/>
    <property type="evidence" value="ECO:0000315"/>
    <property type="project" value="MGI"/>
</dbReference>
<dbReference type="GO" id="GO:0010628">
    <property type="term" value="P:positive regulation of gene expression"/>
    <property type="evidence" value="ECO:0007669"/>
    <property type="project" value="Ensembl"/>
</dbReference>
<dbReference type="GO" id="GO:1902255">
    <property type="term" value="P:positive regulation of intrinsic apoptotic signaling pathway by p53 class mediator"/>
    <property type="evidence" value="ECO:0007669"/>
    <property type="project" value="Ensembl"/>
</dbReference>
<dbReference type="GO" id="GO:0050821">
    <property type="term" value="P:protein stabilization"/>
    <property type="evidence" value="ECO:0007669"/>
    <property type="project" value="Ensembl"/>
</dbReference>
<dbReference type="GO" id="GO:0042274">
    <property type="term" value="P:ribosomal small subunit biogenesis"/>
    <property type="evidence" value="ECO:0000250"/>
    <property type="project" value="UniProtKB"/>
</dbReference>
<dbReference type="GO" id="GO:0006364">
    <property type="term" value="P:rRNA processing"/>
    <property type="evidence" value="ECO:0007669"/>
    <property type="project" value="Ensembl"/>
</dbReference>
<dbReference type="InterPro" id="IPR000554">
    <property type="entry name" value="Ribosomal_eS7"/>
</dbReference>
<dbReference type="InterPro" id="IPR047861">
    <property type="entry name" value="Ribosomal_eS7_CS"/>
</dbReference>
<dbReference type="PANTHER" id="PTHR11278">
    <property type="entry name" value="40S RIBOSOMAL PROTEIN S7"/>
    <property type="match status" value="1"/>
</dbReference>
<dbReference type="PANTHER" id="PTHR11278:SF0">
    <property type="entry name" value="SMALL RIBOSOMAL SUBUNIT PROTEIN ES7"/>
    <property type="match status" value="1"/>
</dbReference>
<dbReference type="Pfam" id="PF01251">
    <property type="entry name" value="Ribosomal_S7e"/>
    <property type="match status" value="1"/>
</dbReference>
<dbReference type="PROSITE" id="PS00948">
    <property type="entry name" value="RIBOSOMAL_S7E"/>
    <property type="match status" value="1"/>
</dbReference>
<accession>P62082</accession>
<accession>P23821</accession>
<accession>P24818</accession>
<evidence type="ECO:0000250" key="1">
    <source>
        <dbReference type="UniProtKB" id="P62081"/>
    </source>
</evidence>
<evidence type="ECO:0000269" key="2">
    <source>
    </source>
</evidence>
<evidence type="ECO:0000305" key="3"/>
<evidence type="ECO:0007744" key="4">
    <source>
        <dbReference type="PDB" id="7CPU"/>
    </source>
</evidence>
<evidence type="ECO:0007744" key="5">
    <source>
        <dbReference type="PDB" id="7CPV"/>
    </source>
</evidence>
<comment type="function">
    <text evidence="1 2">Component of the small ribosomal subunit (PubMed:36517592). The ribosome is a large ribonucleoprotein complex responsible for the synthesis of proteins in the cell (PubMed:36517592). Required for rRNA maturation (By similarity). Part of the small subunit (SSU) processome, first precursor of the small eukaryotic ribosomal subunit. During the assembly of the SSU processome in the nucleolus, many ribosome biogenesis factors, an RNA chaperone and ribosomal proteins associate with the nascent pre-rRNA and work in concert to generate RNA folding, modifications, rearrangements and cleavage as well as targeted degradation of pre-ribosomal RNA by the RNA exosome (By similarity).</text>
</comment>
<comment type="subunit">
    <text evidence="1 2">Component of the small ribosomal subunit (PubMed:36517592). Part of the small subunit (SSU) processome, composed of more than 70 proteins and the RNA chaperone small nucleolar RNA (snoRNA) U3 (By similarity). Binds IPO9 with high affinity (By similarity). Interacts with NEK6 (By similarity). Interacts with DESI2 (By similarity). Interacts with IPO5, IPO7 and KPNB1; these interactions may be involved in RPS7 nuclear import for the assembly of ribosomal subunits (By similarity).</text>
</comment>
<comment type="subcellular location">
    <subcellularLocation>
        <location evidence="1">Cytoplasm</location>
        <location evidence="1">Cytoskeleton</location>
        <location evidence="1">Microtubule organizing center</location>
        <location evidence="1">Centrosome</location>
    </subcellularLocation>
    <subcellularLocation>
        <location evidence="1">Cytoplasm</location>
    </subcellularLocation>
    <subcellularLocation>
        <location evidence="1">Nucleus</location>
        <location evidence="1">Nucleolus</location>
    </subcellularLocation>
    <text evidence="1">Although RPS7 is functional within the cytoplasm, the assembly of ribosomal subunits occurs in the nucleus. RPS7 nuclear import is mediated by IPO5/RanBP5, IPO7/RanBP7, KPNB1/importin-beta or TPNO1/Trn. Colocalizes with NEK6 in the centrosome.</text>
</comment>
<comment type="PTM">
    <text evidence="1">Phosphorylated by NEK6.</text>
</comment>
<comment type="PTM">
    <text evidence="1">Ubiquitinated. Deubiquitinated by DESI2, leading to its stabilization.</text>
</comment>
<comment type="similarity">
    <text evidence="3">Belongs to the eukaryotic ribosomal protein eS7 family.</text>
</comment>
<gene>
    <name type="primary">Rps7</name>
</gene>
<feature type="chain" id="PRO_0000174191" description="Small ribosomal subunit protein eS7">
    <location>
        <begin position="1"/>
        <end position="194"/>
    </location>
</feature>
<feature type="modified residue" description="N-acetylmethionine" evidence="1">
    <location>
        <position position="1"/>
    </location>
</feature>
<feature type="modified residue" description="N6-acetyllysine; alternate" evidence="1">
    <location>
        <position position="74"/>
    </location>
</feature>
<feature type="cross-link" description="Glycyl lysine isopeptide (Lys-Gly) (interchain with G-Cter in SUMO2)" evidence="1">
    <location>
        <position position="70"/>
    </location>
</feature>
<feature type="cross-link" description="Glycyl lysine isopeptide (Lys-Gly) (interchain with G-Cter in SUMO2); alternate" evidence="1">
    <location>
        <position position="74"/>
    </location>
</feature>
<proteinExistence type="evidence at protein level"/>